<sequence>MNEKQKLESGQVHPSDKKSEKDYSKYFEAVYIPPSLKDAKKRGKEAVTYHNDFKISEQFKGLGDGRKFYIRTYGCQMNEHDTEVMAGIFMALGYEATNSVDDANVILLNTCAIRENAENKVFGELGHLKALKKNNPDLILGVCGCMSQEESVVNRILKKHPFVDMIFGTHNIHRLPELLSEAYLSKEMVVEVWSKEGDVIENLPKVRNGKIKGWVNIMYGCDKFCTYCIVPYTRGKERSRRPEDIIQEVRRLASEGYKEITLLGQNVNAYGKDFEDMTYGLGDLMDELRKIDIPRIRFTTSHPRDFDDRLIEVLAKGGNLLDHIHLPVQSGSSEVLKLMARKYDRERYMELVRKIKEAMPNASLTTDIIVGFPNETDEQFEETLSLYREVEFDSAYTFIYSPREGTPAAKMKDNVPMRVKKERLQRLNALVNEISAKKMKEYEGKVVEVLVEGESKNNPDILAGYTEKSKLVNFKGPKEAIGKIVRVKIQQAKTWSLDGEMVGEAIEVK</sequence>
<accession>O31778</accession>
<feature type="chain" id="PRO_0000141728" description="tRNA-2-methylthio-N(6)-dimethylallyladenosine synthase">
    <location>
        <begin position="1"/>
        <end position="509"/>
    </location>
</feature>
<feature type="domain" description="MTTase N-terminal" evidence="2">
    <location>
        <begin position="66"/>
        <end position="184"/>
    </location>
</feature>
<feature type="domain" description="Radical SAM core" evidence="3">
    <location>
        <begin position="207"/>
        <end position="437"/>
    </location>
</feature>
<feature type="domain" description="TRAM" evidence="2">
    <location>
        <begin position="440"/>
        <end position="503"/>
    </location>
</feature>
<feature type="region of interest" description="Disordered" evidence="4">
    <location>
        <begin position="1"/>
        <end position="21"/>
    </location>
</feature>
<feature type="binding site" evidence="2">
    <location>
        <position position="75"/>
    </location>
    <ligand>
        <name>[4Fe-4S] cluster</name>
        <dbReference type="ChEBI" id="CHEBI:49883"/>
        <label>1</label>
    </ligand>
</feature>
<feature type="binding site" evidence="2">
    <location>
        <position position="111"/>
    </location>
    <ligand>
        <name>[4Fe-4S] cluster</name>
        <dbReference type="ChEBI" id="CHEBI:49883"/>
        <label>1</label>
    </ligand>
</feature>
<feature type="binding site" evidence="2">
    <location>
        <position position="145"/>
    </location>
    <ligand>
        <name>[4Fe-4S] cluster</name>
        <dbReference type="ChEBI" id="CHEBI:49883"/>
        <label>1</label>
    </ligand>
</feature>
<feature type="binding site" evidence="2">
    <location>
        <position position="221"/>
    </location>
    <ligand>
        <name>[4Fe-4S] cluster</name>
        <dbReference type="ChEBI" id="CHEBI:49883"/>
        <label>2</label>
        <note>4Fe-4S-S-AdoMet</note>
    </ligand>
</feature>
<feature type="binding site" evidence="2">
    <location>
        <position position="225"/>
    </location>
    <ligand>
        <name>[4Fe-4S] cluster</name>
        <dbReference type="ChEBI" id="CHEBI:49883"/>
        <label>2</label>
        <note>4Fe-4S-S-AdoMet</note>
    </ligand>
</feature>
<feature type="binding site" evidence="2">
    <location>
        <position position="228"/>
    </location>
    <ligand>
        <name>[4Fe-4S] cluster</name>
        <dbReference type="ChEBI" id="CHEBI:49883"/>
        <label>2</label>
        <note>4Fe-4S-S-AdoMet</note>
    </ligand>
</feature>
<proteinExistence type="evidence at protein level"/>
<name>MIAB_BACSU</name>
<dbReference type="EC" id="2.8.4.3" evidence="2 5"/>
<dbReference type="EMBL" id="AL009126">
    <property type="protein sequence ID" value="CAB13574.1"/>
    <property type="molecule type" value="Genomic_DNA"/>
</dbReference>
<dbReference type="PIR" id="D69884">
    <property type="entry name" value="D69884"/>
</dbReference>
<dbReference type="RefSeq" id="NP_389583.1">
    <property type="nucleotide sequence ID" value="NC_000964.3"/>
</dbReference>
<dbReference type="RefSeq" id="WP_003244831.1">
    <property type="nucleotide sequence ID" value="NZ_OZ025638.1"/>
</dbReference>
<dbReference type="SMR" id="O31778"/>
<dbReference type="FunCoup" id="O31778">
    <property type="interactions" value="668"/>
</dbReference>
<dbReference type="STRING" id="224308.BSU17010"/>
<dbReference type="jPOST" id="O31778"/>
<dbReference type="PaxDb" id="224308-BSU17010"/>
<dbReference type="EnsemblBacteria" id="CAB13574">
    <property type="protein sequence ID" value="CAB13574"/>
    <property type="gene ID" value="BSU_17010"/>
</dbReference>
<dbReference type="GeneID" id="939451"/>
<dbReference type="KEGG" id="bsu:BSU17010"/>
<dbReference type="PATRIC" id="fig|224308.179.peg.1842"/>
<dbReference type="eggNOG" id="COG0621">
    <property type="taxonomic scope" value="Bacteria"/>
</dbReference>
<dbReference type="InParanoid" id="O31778"/>
<dbReference type="OrthoDB" id="9805215at2"/>
<dbReference type="PhylomeDB" id="O31778"/>
<dbReference type="BioCyc" id="BSUB:BSU17010-MONOMER"/>
<dbReference type="Proteomes" id="UP000001570">
    <property type="component" value="Chromosome"/>
</dbReference>
<dbReference type="GO" id="GO:0005829">
    <property type="term" value="C:cytosol"/>
    <property type="evidence" value="ECO:0000318"/>
    <property type="project" value="GO_Central"/>
</dbReference>
<dbReference type="GO" id="GO:0051539">
    <property type="term" value="F:4 iron, 4 sulfur cluster binding"/>
    <property type="evidence" value="ECO:0000318"/>
    <property type="project" value="GO_Central"/>
</dbReference>
<dbReference type="GO" id="GO:0046872">
    <property type="term" value="F:metal ion binding"/>
    <property type="evidence" value="ECO:0007669"/>
    <property type="project" value="UniProtKB-KW"/>
</dbReference>
<dbReference type="GO" id="GO:0035597">
    <property type="term" value="F:N6-isopentenyladenosine methylthiotransferase activity"/>
    <property type="evidence" value="ECO:0000315"/>
    <property type="project" value="UniProtKB"/>
</dbReference>
<dbReference type="GO" id="GO:0035600">
    <property type="term" value="P:tRNA methylthiolation"/>
    <property type="evidence" value="ECO:0000315"/>
    <property type="project" value="UniProtKB"/>
</dbReference>
<dbReference type="CDD" id="cd01335">
    <property type="entry name" value="Radical_SAM"/>
    <property type="match status" value="1"/>
</dbReference>
<dbReference type="FunFam" id="3.40.50.12160:FF:000006">
    <property type="entry name" value="tRNA-2-methylthio-N(6)-dimethylallyladenosine synthase"/>
    <property type="match status" value="1"/>
</dbReference>
<dbReference type="FunFam" id="3.80.30.20:FF:000001">
    <property type="entry name" value="tRNA-2-methylthio-N(6)-dimethylallyladenosine synthase 2"/>
    <property type="match status" value="1"/>
</dbReference>
<dbReference type="Gene3D" id="3.40.50.12160">
    <property type="entry name" value="Methylthiotransferase, N-terminal domain"/>
    <property type="match status" value="1"/>
</dbReference>
<dbReference type="Gene3D" id="3.80.30.20">
    <property type="entry name" value="tm_1862 like domain"/>
    <property type="match status" value="1"/>
</dbReference>
<dbReference type="HAMAP" id="MF_01864">
    <property type="entry name" value="tRNA_metthiotr_MiaB"/>
    <property type="match status" value="1"/>
</dbReference>
<dbReference type="InterPro" id="IPR006638">
    <property type="entry name" value="Elp3/MiaA/NifB-like_rSAM"/>
</dbReference>
<dbReference type="InterPro" id="IPR005839">
    <property type="entry name" value="Methylthiotransferase"/>
</dbReference>
<dbReference type="InterPro" id="IPR020612">
    <property type="entry name" value="Methylthiotransferase_CS"/>
</dbReference>
<dbReference type="InterPro" id="IPR013848">
    <property type="entry name" value="Methylthiotransferase_N"/>
</dbReference>
<dbReference type="InterPro" id="IPR038135">
    <property type="entry name" value="Methylthiotransferase_N_sf"/>
</dbReference>
<dbReference type="InterPro" id="IPR006463">
    <property type="entry name" value="MiaB_methiolase"/>
</dbReference>
<dbReference type="InterPro" id="IPR007197">
    <property type="entry name" value="rSAM"/>
</dbReference>
<dbReference type="InterPro" id="IPR023404">
    <property type="entry name" value="rSAM_horseshoe"/>
</dbReference>
<dbReference type="InterPro" id="IPR002792">
    <property type="entry name" value="TRAM_dom"/>
</dbReference>
<dbReference type="NCBIfam" id="TIGR01574">
    <property type="entry name" value="miaB-methiolase"/>
    <property type="match status" value="1"/>
</dbReference>
<dbReference type="NCBIfam" id="TIGR00089">
    <property type="entry name" value="MiaB/RimO family radical SAM methylthiotransferase"/>
    <property type="match status" value="1"/>
</dbReference>
<dbReference type="PANTHER" id="PTHR43020">
    <property type="entry name" value="CDK5 REGULATORY SUBUNIT-ASSOCIATED PROTEIN 1"/>
    <property type="match status" value="1"/>
</dbReference>
<dbReference type="PANTHER" id="PTHR43020:SF2">
    <property type="entry name" value="MITOCHONDRIAL TRNA METHYLTHIOTRANSFERASE CDK5RAP1"/>
    <property type="match status" value="1"/>
</dbReference>
<dbReference type="Pfam" id="PF04055">
    <property type="entry name" value="Radical_SAM"/>
    <property type="match status" value="1"/>
</dbReference>
<dbReference type="Pfam" id="PF01938">
    <property type="entry name" value="TRAM"/>
    <property type="match status" value="1"/>
</dbReference>
<dbReference type="Pfam" id="PF00919">
    <property type="entry name" value="UPF0004"/>
    <property type="match status" value="1"/>
</dbReference>
<dbReference type="SFLD" id="SFLDF00273">
    <property type="entry name" value="(dimethylallyl)adenosine_tRNA"/>
    <property type="match status" value="1"/>
</dbReference>
<dbReference type="SFLD" id="SFLDG01082">
    <property type="entry name" value="B12-binding_domain_containing"/>
    <property type="match status" value="1"/>
</dbReference>
<dbReference type="SFLD" id="SFLDS00029">
    <property type="entry name" value="Radical_SAM"/>
    <property type="match status" value="1"/>
</dbReference>
<dbReference type="SMART" id="SM00729">
    <property type="entry name" value="Elp3"/>
    <property type="match status" value="1"/>
</dbReference>
<dbReference type="SUPFAM" id="SSF102114">
    <property type="entry name" value="Radical SAM enzymes"/>
    <property type="match status" value="1"/>
</dbReference>
<dbReference type="PROSITE" id="PS51449">
    <property type="entry name" value="MTTASE_N"/>
    <property type="match status" value="1"/>
</dbReference>
<dbReference type="PROSITE" id="PS01278">
    <property type="entry name" value="MTTASE_RADICAL"/>
    <property type="match status" value="1"/>
</dbReference>
<dbReference type="PROSITE" id="PS51918">
    <property type="entry name" value="RADICAL_SAM"/>
    <property type="match status" value="1"/>
</dbReference>
<dbReference type="PROSITE" id="PS50926">
    <property type="entry name" value="TRAM"/>
    <property type="match status" value="1"/>
</dbReference>
<organism>
    <name type="scientific">Bacillus subtilis (strain 168)</name>
    <dbReference type="NCBI Taxonomy" id="224308"/>
    <lineage>
        <taxon>Bacteria</taxon>
        <taxon>Bacillati</taxon>
        <taxon>Bacillota</taxon>
        <taxon>Bacilli</taxon>
        <taxon>Bacillales</taxon>
        <taxon>Bacillaceae</taxon>
        <taxon>Bacillus</taxon>
    </lineage>
</organism>
<comment type="function">
    <text evidence="2 5">Catalyzes the methylthiolation of N6-(dimethylallyl)adenosine (i(6)A), leading to the formation of 2-methylthio-N6-(dimethylallyl)adenosine (ms(2)i(6)A) at position 37 in tRNAs that read codons beginning with uridine.</text>
</comment>
<comment type="catalytic activity">
    <reaction evidence="2 5">
        <text>N(6)-dimethylallyladenosine(37) in tRNA + (sulfur carrier)-SH + AH2 + 2 S-adenosyl-L-methionine = 2-methylsulfanyl-N(6)-dimethylallyladenosine(37) in tRNA + (sulfur carrier)-H + 5'-deoxyadenosine + L-methionine + A + S-adenosyl-L-homocysteine + 2 H(+)</text>
        <dbReference type="Rhea" id="RHEA:37067"/>
        <dbReference type="Rhea" id="RHEA-COMP:10375"/>
        <dbReference type="Rhea" id="RHEA-COMP:10376"/>
        <dbReference type="Rhea" id="RHEA-COMP:14737"/>
        <dbReference type="Rhea" id="RHEA-COMP:14739"/>
        <dbReference type="ChEBI" id="CHEBI:13193"/>
        <dbReference type="ChEBI" id="CHEBI:15378"/>
        <dbReference type="ChEBI" id="CHEBI:17319"/>
        <dbReference type="ChEBI" id="CHEBI:17499"/>
        <dbReference type="ChEBI" id="CHEBI:29917"/>
        <dbReference type="ChEBI" id="CHEBI:57844"/>
        <dbReference type="ChEBI" id="CHEBI:57856"/>
        <dbReference type="ChEBI" id="CHEBI:59789"/>
        <dbReference type="ChEBI" id="CHEBI:64428"/>
        <dbReference type="ChEBI" id="CHEBI:74415"/>
        <dbReference type="ChEBI" id="CHEBI:74417"/>
        <dbReference type="EC" id="2.8.4.3"/>
    </reaction>
    <physiologicalReaction direction="left-to-right" evidence="5">
        <dbReference type="Rhea" id="RHEA:37068"/>
    </physiologicalReaction>
</comment>
<comment type="catalytic activity">
    <reaction evidence="1">
        <text>N(6)-dimethylallyladenosine(37) in tRNA + (sulfur carrier)-SH + AH2 + S-adenosyl-L-methionine = 2-thio-N(6)-dimethylallyladenosine(37) in tRNA + (sulfur carrier)-H + 5'-deoxyadenosine + L-methionine + A + H(+)</text>
        <dbReference type="Rhea" id="RHEA:36339"/>
        <dbReference type="Rhea" id="RHEA-COMP:10375"/>
        <dbReference type="Rhea" id="RHEA-COMP:10377"/>
        <dbReference type="Rhea" id="RHEA-COMP:14737"/>
        <dbReference type="Rhea" id="RHEA-COMP:14739"/>
        <dbReference type="ChEBI" id="CHEBI:13193"/>
        <dbReference type="ChEBI" id="CHEBI:15378"/>
        <dbReference type="ChEBI" id="CHEBI:17319"/>
        <dbReference type="ChEBI" id="CHEBI:17499"/>
        <dbReference type="ChEBI" id="CHEBI:29917"/>
        <dbReference type="ChEBI" id="CHEBI:57844"/>
        <dbReference type="ChEBI" id="CHEBI:59789"/>
        <dbReference type="ChEBI" id="CHEBI:64428"/>
        <dbReference type="ChEBI" id="CHEBI:74415"/>
        <dbReference type="ChEBI" id="CHEBI:74416"/>
    </reaction>
    <physiologicalReaction direction="left-to-right" evidence="1">
        <dbReference type="Rhea" id="RHEA:36340"/>
    </physiologicalReaction>
</comment>
<comment type="catalytic activity">
    <reaction evidence="1">
        <text>2-thio-N(6)-dimethylallyladenosine(37) in tRNA + S-adenosyl-L-methionine = 2-methylsulfanyl-N(6)-dimethylallyladenosine(37) in tRNA + S-adenosyl-L-homocysteine + H(+)</text>
        <dbReference type="Rhea" id="RHEA:37063"/>
        <dbReference type="Rhea" id="RHEA-COMP:10376"/>
        <dbReference type="Rhea" id="RHEA-COMP:10377"/>
        <dbReference type="ChEBI" id="CHEBI:15378"/>
        <dbReference type="ChEBI" id="CHEBI:57856"/>
        <dbReference type="ChEBI" id="CHEBI:59789"/>
        <dbReference type="ChEBI" id="CHEBI:74416"/>
        <dbReference type="ChEBI" id="CHEBI:74417"/>
    </reaction>
    <physiologicalReaction direction="left-to-right" evidence="1">
        <dbReference type="Rhea" id="RHEA:37064"/>
    </physiologicalReaction>
</comment>
<comment type="cofactor">
    <cofactor evidence="2">
        <name>[4Fe-4S] cluster</name>
        <dbReference type="ChEBI" id="CHEBI:49883"/>
    </cofactor>
    <text evidence="2">Binds 2 [4Fe-4S] clusters. One cluster is coordinated with 3 cysteines and an exchangeable S-adenosyl-L-methionine.</text>
</comment>
<comment type="subunit">
    <text evidence="2">Monomer.</text>
</comment>
<comment type="subcellular location">
    <subcellularLocation>
        <location evidence="2">Cytoplasm</location>
    </subcellularLocation>
</comment>
<comment type="similarity">
    <text evidence="2">Belongs to the methylthiotransferase family. MiaB subfamily.</text>
</comment>
<reference key="1">
    <citation type="journal article" date="1997" name="Nature">
        <title>The complete genome sequence of the Gram-positive bacterium Bacillus subtilis.</title>
        <authorList>
            <person name="Kunst F."/>
            <person name="Ogasawara N."/>
            <person name="Moszer I."/>
            <person name="Albertini A.M."/>
            <person name="Alloni G."/>
            <person name="Azevedo V."/>
            <person name="Bertero M.G."/>
            <person name="Bessieres P."/>
            <person name="Bolotin A."/>
            <person name="Borchert S."/>
            <person name="Borriss R."/>
            <person name="Boursier L."/>
            <person name="Brans A."/>
            <person name="Braun M."/>
            <person name="Brignell S.C."/>
            <person name="Bron S."/>
            <person name="Brouillet S."/>
            <person name="Bruschi C.V."/>
            <person name="Caldwell B."/>
            <person name="Capuano V."/>
            <person name="Carter N.M."/>
            <person name="Choi S.-K."/>
            <person name="Codani J.-J."/>
            <person name="Connerton I.F."/>
            <person name="Cummings N.J."/>
            <person name="Daniel R.A."/>
            <person name="Denizot F."/>
            <person name="Devine K.M."/>
            <person name="Duesterhoeft A."/>
            <person name="Ehrlich S.D."/>
            <person name="Emmerson P.T."/>
            <person name="Entian K.-D."/>
            <person name="Errington J."/>
            <person name="Fabret C."/>
            <person name="Ferrari E."/>
            <person name="Foulger D."/>
            <person name="Fritz C."/>
            <person name="Fujita M."/>
            <person name="Fujita Y."/>
            <person name="Fuma S."/>
            <person name="Galizzi A."/>
            <person name="Galleron N."/>
            <person name="Ghim S.-Y."/>
            <person name="Glaser P."/>
            <person name="Goffeau A."/>
            <person name="Golightly E.J."/>
            <person name="Grandi G."/>
            <person name="Guiseppi G."/>
            <person name="Guy B.J."/>
            <person name="Haga K."/>
            <person name="Haiech J."/>
            <person name="Harwood C.R."/>
            <person name="Henaut A."/>
            <person name="Hilbert H."/>
            <person name="Holsappel S."/>
            <person name="Hosono S."/>
            <person name="Hullo M.-F."/>
            <person name="Itaya M."/>
            <person name="Jones L.-M."/>
            <person name="Joris B."/>
            <person name="Karamata D."/>
            <person name="Kasahara Y."/>
            <person name="Klaerr-Blanchard M."/>
            <person name="Klein C."/>
            <person name="Kobayashi Y."/>
            <person name="Koetter P."/>
            <person name="Koningstein G."/>
            <person name="Krogh S."/>
            <person name="Kumano M."/>
            <person name="Kurita K."/>
            <person name="Lapidus A."/>
            <person name="Lardinois S."/>
            <person name="Lauber J."/>
            <person name="Lazarevic V."/>
            <person name="Lee S.-M."/>
            <person name="Levine A."/>
            <person name="Liu H."/>
            <person name="Masuda S."/>
            <person name="Mauel C."/>
            <person name="Medigue C."/>
            <person name="Medina N."/>
            <person name="Mellado R.P."/>
            <person name="Mizuno M."/>
            <person name="Moestl D."/>
            <person name="Nakai S."/>
            <person name="Noback M."/>
            <person name="Noone D."/>
            <person name="O'Reilly M."/>
            <person name="Ogawa K."/>
            <person name="Ogiwara A."/>
            <person name="Oudega B."/>
            <person name="Park S.-H."/>
            <person name="Parro V."/>
            <person name="Pohl T.M."/>
            <person name="Portetelle D."/>
            <person name="Porwollik S."/>
            <person name="Prescott A.M."/>
            <person name="Presecan E."/>
            <person name="Pujic P."/>
            <person name="Purnelle B."/>
            <person name="Rapoport G."/>
            <person name="Rey M."/>
            <person name="Reynolds S."/>
            <person name="Rieger M."/>
            <person name="Rivolta C."/>
            <person name="Rocha E."/>
            <person name="Roche B."/>
            <person name="Rose M."/>
            <person name="Sadaie Y."/>
            <person name="Sato T."/>
            <person name="Scanlan E."/>
            <person name="Schleich S."/>
            <person name="Schroeter R."/>
            <person name="Scoffone F."/>
            <person name="Sekiguchi J."/>
            <person name="Sekowska A."/>
            <person name="Seror S.J."/>
            <person name="Serror P."/>
            <person name="Shin B.-S."/>
            <person name="Soldo B."/>
            <person name="Sorokin A."/>
            <person name="Tacconi E."/>
            <person name="Takagi T."/>
            <person name="Takahashi H."/>
            <person name="Takemaru K."/>
            <person name="Takeuchi M."/>
            <person name="Tamakoshi A."/>
            <person name="Tanaka T."/>
            <person name="Terpstra P."/>
            <person name="Tognoni A."/>
            <person name="Tosato V."/>
            <person name="Uchiyama S."/>
            <person name="Vandenbol M."/>
            <person name="Vannier F."/>
            <person name="Vassarotti A."/>
            <person name="Viari A."/>
            <person name="Wambutt R."/>
            <person name="Wedler E."/>
            <person name="Wedler H."/>
            <person name="Weitzenegger T."/>
            <person name="Winters P."/>
            <person name="Wipat A."/>
            <person name="Yamamoto H."/>
            <person name="Yamane K."/>
            <person name="Yasumoto K."/>
            <person name="Yata K."/>
            <person name="Yoshida K."/>
            <person name="Yoshikawa H.-F."/>
            <person name="Zumstein E."/>
            <person name="Yoshikawa H."/>
            <person name="Danchin A."/>
        </authorList>
    </citation>
    <scope>NUCLEOTIDE SEQUENCE [LARGE SCALE GENOMIC DNA]</scope>
    <source>
        <strain>168</strain>
    </source>
</reference>
<reference key="2">
    <citation type="journal article" date="2010" name="Nucleic Acids Res.">
        <title>Functional characterization of the YmcB and YqeV tRNA methylthiotransferases of Bacillus subtilis.</title>
        <authorList>
            <person name="Anton B.P."/>
            <person name="Russell S.P."/>
            <person name="Vertrees J."/>
            <person name="Kasif S."/>
            <person name="Raleigh E.A."/>
            <person name="Limbach P.A."/>
            <person name="Roberts R.J."/>
        </authorList>
    </citation>
    <scope>FUNCTION AS A METHYLTHIOTRANSFERASE</scope>
    <scope>CATALYTIC ACTIVITY</scope>
    <source>
        <strain>168</strain>
    </source>
</reference>
<evidence type="ECO:0000250" key="1">
    <source>
        <dbReference type="UniProtKB" id="Q9WZC1"/>
    </source>
</evidence>
<evidence type="ECO:0000255" key="2">
    <source>
        <dbReference type="HAMAP-Rule" id="MF_01864"/>
    </source>
</evidence>
<evidence type="ECO:0000255" key="3">
    <source>
        <dbReference type="PROSITE-ProRule" id="PRU01266"/>
    </source>
</evidence>
<evidence type="ECO:0000256" key="4">
    <source>
        <dbReference type="SAM" id="MobiDB-lite"/>
    </source>
</evidence>
<evidence type="ECO:0000269" key="5">
    <source>
    </source>
</evidence>
<keyword id="KW-0004">4Fe-4S</keyword>
<keyword id="KW-0963">Cytoplasm</keyword>
<keyword id="KW-0408">Iron</keyword>
<keyword id="KW-0411">Iron-sulfur</keyword>
<keyword id="KW-0479">Metal-binding</keyword>
<keyword id="KW-1185">Reference proteome</keyword>
<keyword id="KW-0949">S-adenosyl-L-methionine</keyword>
<keyword id="KW-0808">Transferase</keyword>
<keyword id="KW-0819">tRNA processing</keyword>
<gene>
    <name evidence="2" type="primary">miaB</name>
    <name type="synonym">ymcB</name>
    <name type="ordered locus">BSU17010</name>
</gene>
<protein>
    <recommendedName>
        <fullName evidence="2">tRNA-2-methylthio-N(6)-dimethylallyladenosine synthase</fullName>
        <ecNumber evidence="2 5">2.8.4.3</ecNumber>
    </recommendedName>
    <alternativeName>
        <fullName evidence="2">(Dimethylallyl)adenosine tRNA methylthiotransferase MiaB</fullName>
    </alternativeName>
    <alternativeName>
        <fullName evidence="2">tRNA-i(6)A37 methylthiotransferase</fullName>
    </alternativeName>
</protein>